<proteinExistence type="evidence at protein level"/>
<evidence type="ECO:0000255" key="1"/>
<evidence type="ECO:0000269" key="2">
    <source>
    </source>
</evidence>
<evidence type="ECO:0000303" key="3">
    <source>
    </source>
</evidence>
<dbReference type="EC" id="2.6.1.45"/>
<dbReference type="EC" id="2.6.1.44"/>
<dbReference type="SMR" id="P84187"/>
<dbReference type="STRING" id="4577.P84187"/>
<dbReference type="InParanoid" id="P84187"/>
<dbReference type="Proteomes" id="UP000007305">
    <property type="component" value="Unplaced"/>
</dbReference>
<dbReference type="ExpressionAtlas" id="P84187">
    <property type="expression patterns" value="baseline and differential"/>
</dbReference>
<dbReference type="GO" id="GO:0005777">
    <property type="term" value="C:peroxisome"/>
    <property type="evidence" value="ECO:0007669"/>
    <property type="project" value="UniProtKB-SubCell"/>
</dbReference>
<dbReference type="GO" id="GO:0008453">
    <property type="term" value="F:alanine-glyoxylate transaminase activity"/>
    <property type="evidence" value="ECO:0007669"/>
    <property type="project" value="UniProtKB-EC"/>
</dbReference>
<dbReference type="GO" id="GO:0050281">
    <property type="term" value="F:L-serine-glyoxylate transaminase activity"/>
    <property type="evidence" value="ECO:0007669"/>
    <property type="project" value="UniProtKB-EC"/>
</dbReference>
<dbReference type="Gene3D" id="3.40.640.10">
    <property type="entry name" value="Type I PLP-dependent aspartate aminotransferase-like (Major domain)"/>
    <property type="match status" value="1"/>
</dbReference>
<dbReference type="InterPro" id="IPR020578">
    <property type="entry name" value="Aminotrans_V_PyrdxlP_BS"/>
</dbReference>
<dbReference type="InterPro" id="IPR015424">
    <property type="entry name" value="PyrdxlP-dep_Trfase"/>
</dbReference>
<dbReference type="InterPro" id="IPR015421">
    <property type="entry name" value="PyrdxlP-dep_Trfase_major"/>
</dbReference>
<dbReference type="SUPFAM" id="SSF53383">
    <property type="entry name" value="PLP-dependent transferases"/>
    <property type="match status" value="1"/>
</dbReference>
<dbReference type="PROSITE" id="PS00595">
    <property type="entry name" value="AA_TRANSFER_CLASS_5"/>
    <property type="match status" value="1"/>
</dbReference>
<accession>P84187</accession>
<feature type="chain" id="PRO_0000150235" description="Serine--glyoxylate aminotransferase">
    <location>
        <begin position="1"/>
        <end position="136" status="greater than"/>
    </location>
</feature>
<feature type="non-consecutive residues" evidence="3">
    <location>
        <begin position="9"/>
        <end position="10"/>
    </location>
</feature>
<feature type="non-consecutive residues" evidence="3">
    <location>
        <begin position="13"/>
        <end position="14"/>
    </location>
</feature>
<feature type="non-consecutive residues" evidence="3">
    <location>
        <begin position="30"/>
        <end position="31"/>
    </location>
</feature>
<feature type="non-consecutive residues" evidence="3">
    <location>
        <begin position="41"/>
        <end position="42"/>
    </location>
</feature>
<feature type="non-consecutive residues" evidence="3">
    <location>
        <begin position="46"/>
        <end position="47"/>
    </location>
</feature>
<feature type="non-consecutive residues" evidence="3">
    <location>
        <begin position="77"/>
        <end position="78"/>
    </location>
</feature>
<feature type="non-consecutive residues" evidence="3">
    <location>
        <begin position="87"/>
        <end position="88"/>
    </location>
</feature>
<feature type="non-consecutive residues" evidence="3">
    <location>
        <begin position="93"/>
        <end position="94"/>
    </location>
</feature>
<feature type="non-consecutive residues" evidence="3">
    <location>
        <begin position="99"/>
        <end position="100"/>
    </location>
</feature>
<feature type="non-consecutive residues" evidence="3">
    <location>
        <begin position="109"/>
        <end position="110"/>
    </location>
</feature>
<feature type="non-consecutive residues" evidence="3">
    <location>
        <begin position="129"/>
        <end position="130"/>
    </location>
</feature>
<feature type="non-terminal residue" evidence="3">
    <location>
        <position position="136"/>
    </location>
</feature>
<organism>
    <name type="scientific">Zea mays</name>
    <name type="common">Maize</name>
    <dbReference type="NCBI Taxonomy" id="4577"/>
    <lineage>
        <taxon>Eukaryota</taxon>
        <taxon>Viridiplantae</taxon>
        <taxon>Streptophyta</taxon>
        <taxon>Embryophyta</taxon>
        <taxon>Tracheophyta</taxon>
        <taxon>Spermatophyta</taxon>
        <taxon>Magnoliopsida</taxon>
        <taxon>Liliopsida</taxon>
        <taxon>Poales</taxon>
        <taxon>Poaceae</taxon>
        <taxon>PACMAD clade</taxon>
        <taxon>Panicoideae</taxon>
        <taxon>Andropogonodae</taxon>
        <taxon>Andropogoneae</taxon>
        <taxon>Tripsacinae</taxon>
        <taxon>Zea</taxon>
    </lineage>
</organism>
<sequence>LDYVYGPGRRAMNSPAVPALTKVLLEDVKKALTNTLSPGDRLLLVDMDEWGVDVALTGSQKALSFPTGMGLVCASPRVFFDWKDYLRTYWHYDQALDLELAVEAWGLSNRYNLSLGLGLNKVAGGKVFRDVGYPVK</sequence>
<name>SGAT_MAIZE</name>
<reference key="1">
    <citation type="journal article" date="2005" name="Acta Biochim. Pol.">
        <title>Some structural properties of plant serine:glyoxylate aminotransferase.</title>
        <authorList>
            <person name="Truszkiewicz W."/>
            <person name="Paszkowski A."/>
        </authorList>
    </citation>
    <scope>PROTEIN SEQUENCE</scope>
    <scope>CATALYTIC ACTIVITY</scope>
    <scope>COFACTOR</scope>
    <scope>ACTIVITY REGULATION</scope>
    <scope>SUBUNIT</scope>
    <scope>SUBCELLULAR LOCATION</scope>
    <scope>TISSUE SPECIFICITY</scope>
    <scope>INDUCTION</scope>
    <source>
        <strain>cv. Duet</strain>
        <tissue>Leaf</tissue>
    </source>
</reference>
<keyword id="KW-0032">Aminotransferase</keyword>
<keyword id="KW-0903">Direct protein sequencing</keyword>
<keyword id="KW-0576">Peroxisome</keyword>
<keyword id="KW-0663">Pyridoxal phosphate</keyword>
<keyword id="KW-1185">Reference proteome</keyword>
<keyword id="KW-0808">Transferase</keyword>
<comment type="catalytic activity">
    <reaction evidence="2">
        <text>glyoxylate + L-serine = 3-hydroxypyruvate + glycine</text>
        <dbReference type="Rhea" id="RHEA:19125"/>
        <dbReference type="ChEBI" id="CHEBI:17180"/>
        <dbReference type="ChEBI" id="CHEBI:33384"/>
        <dbReference type="ChEBI" id="CHEBI:36655"/>
        <dbReference type="ChEBI" id="CHEBI:57305"/>
        <dbReference type="EC" id="2.6.1.45"/>
    </reaction>
</comment>
<comment type="catalytic activity">
    <reaction evidence="2">
        <text>glyoxylate + L-alanine = glycine + pyruvate</text>
        <dbReference type="Rhea" id="RHEA:24248"/>
        <dbReference type="ChEBI" id="CHEBI:15361"/>
        <dbReference type="ChEBI" id="CHEBI:36655"/>
        <dbReference type="ChEBI" id="CHEBI:57305"/>
        <dbReference type="ChEBI" id="CHEBI:57972"/>
        <dbReference type="EC" id="2.6.1.44"/>
    </reaction>
</comment>
<comment type="cofactor">
    <cofactor evidence="2">
        <name>pyridoxal 5'-phosphate</name>
        <dbReference type="ChEBI" id="CHEBI:597326"/>
    </cofactor>
</comment>
<comment type="activity regulation">
    <text evidence="2">Inhibited by aminooxyacetate.</text>
</comment>
<comment type="subunit">
    <text evidence="2">Homodimer.</text>
</comment>
<comment type="subcellular location">
    <subcellularLocation>
        <location evidence="2">Peroxisome</location>
    </subcellularLocation>
</comment>
<comment type="tissue specificity">
    <text evidence="2">Expressed in leaves but not in root tissue or seedlings.</text>
</comment>
<comment type="induction">
    <text evidence="2">By light.</text>
</comment>
<comment type="similarity">
    <text evidence="1">Belongs to the class-V pyridoxal-phosphate-dependent aminotransferase family.</text>
</comment>
<protein>
    <recommendedName>
        <fullName>Serine--glyoxylate aminotransferase</fullName>
        <shortName>SGAT</shortName>
        <ecNumber>2.6.1.45</ecNumber>
    </recommendedName>
    <alternativeName>
        <fullName>Alanine--glyoxylate aminotransferase</fullName>
        <shortName>AGT</shortName>
        <ecNumber>2.6.1.44</ecNumber>
    </alternativeName>
</protein>